<dbReference type="EC" id="7.1.2.2" evidence="1"/>
<dbReference type="EMBL" id="X04465">
    <property type="protein sequence ID" value="CAA28091.1"/>
    <property type="molecule type" value="Genomic_DNA"/>
</dbReference>
<dbReference type="PIR" id="A01024">
    <property type="entry name" value="PWLVB"/>
</dbReference>
<dbReference type="RefSeq" id="NP_039305.1">
    <property type="nucleotide sequence ID" value="NC_001319.1"/>
</dbReference>
<dbReference type="SMR" id="P06284"/>
<dbReference type="GeneID" id="2702553"/>
<dbReference type="GO" id="GO:0009535">
    <property type="term" value="C:chloroplast thylakoid membrane"/>
    <property type="evidence" value="ECO:0007669"/>
    <property type="project" value="UniProtKB-SubCell"/>
</dbReference>
<dbReference type="GO" id="GO:0045259">
    <property type="term" value="C:proton-transporting ATP synthase complex"/>
    <property type="evidence" value="ECO:0007669"/>
    <property type="project" value="UniProtKB-KW"/>
</dbReference>
<dbReference type="GO" id="GO:0005524">
    <property type="term" value="F:ATP binding"/>
    <property type="evidence" value="ECO:0007669"/>
    <property type="project" value="UniProtKB-UniRule"/>
</dbReference>
<dbReference type="GO" id="GO:0016887">
    <property type="term" value="F:ATP hydrolysis activity"/>
    <property type="evidence" value="ECO:0007669"/>
    <property type="project" value="InterPro"/>
</dbReference>
<dbReference type="GO" id="GO:0046933">
    <property type="term" value="F:proton-transporting ATP synthase activity, rotational mechanism"/>
    <property type="evidence" value="ECO:0007669"/>
    <property type="project" value="UniProtKB-UniRule"/>
</dbReference>
<dbReference type="CDD" id="cd18110">
    <property type="entry name" value="ATP-synt_F1_beta_C"/>
    <property type="match status" value="1"/>
</dbReference>
<dbReference type="CDD" id="cd18115">
    <property type="entry name" value="ATP-synt_F1_beta_N"/>
    <property type="match status" value="1"/>
</dbReference>
<dbReference type="CDD" id="cd01133">
    <property type="entry name" value="F1-ATPase_beta_CD"/>
    <property type="match status" value="1"/>
</dbReference>
<dbReference type="FunFam" id="1.10.1140.10:FF:000001">
    <property type="entry name" value="ATP synthase subunit beta"/>
    <property type="match status" value="1"/>
</dbReference>
<dbReference type="FunFam" id="3.40.50.12240:FF:000006">
    <property type="entry name" value="ATP synthase subunit beta"/>
    <property type="match status" value="1"/>
</dbReference>
<dbReference type="FunFam" id="3.40.50.300:FF:000004">
    <property type="entry name" value="ATP synthase subunit beta"/>
    <property type="match status" value="1"/>
</dbReference>
<dbReference type="FunFam" id="2.40.10.170:FF:000002">
    <property type="entry name" value="ATP synthase subunit beta, chloroplastic"/>
    <property type="match status" value="1"/>
</dbReference>
<dbReference type="Gene3D" id="2.40.10.170">
    <property type="match status" value="1"/>
</dbReference>
<dbReference type="Gene3D" id="1.10.1140.10">
    <property type="entry name" value="Bovine Mitochondrial F1-atpase, Atp Synthase Beta Chain, Chain D, domain 3"/>
    <property type="match status" value="1"/>
</dbReference>
<dbReference type="Gene3D" id="3.40.50.300">
    <property type="entry name" value="P-loop containing nucleotide triphosphate hydrolases"/>
    <property type="match status" value="1"/>
</dbReference>
<dbReference type="HAMAP" id="MF_01347">
    <property type="entry name" value="ATP_synth_beta_bact"/>
    <property type="match status" value="1"/>
</dbReference>
<dbReference type="InterPro" id="IPR003593">
    <property type="entry name" value="AAA+_ATPase"/>
</dbReference>
<dbReference type="InterPro" id="IPR055190">
    <property type="entry name" value="ATP-synt_VA_C"/>
</dbReference>
<dbReference type="InterPro" id="IPR005722">
    <property type="entry name" value="ATP_synth_F1_bsu"/>
</dbReference>
<dbReference type="InterPro" id="IPR020003">
    <property type="entry name" value="ATPase_a/bsu_AS"/>
</dbReference>
<dbReference type="InterPro" id="IPR050053">
    <property type="entry name" value="ATPase_alpha/beta_chains"/>
</dbReference>
<dbReference type="InterPro" id="IPR004100">
    <property type="entry name" value="ATPase_F1/V1/A1_a/bsu_N"/>
</dbReference>
<dbReference type="InterPro" id="IPR036121">
    <property type="entry name" value="ATPase_F1/V1/A1_a/bsu_N_sf"/>
</dbReference>
<dbReference type="InterPro" id="IPR000194">
    <property type="entry name" value="ATPase_F1/V1/A1_a/bsu_nucl-bd"/>
</dbReference>
<dbReference type="InterPro" id="IPR024034">
    <property type="entry name" value="ATPase_F1/V1_b/a_C"/>
</dbReference>
<dbReference type="InterPro" id="IPR027417">
    <property type="entry name" value="P-loop_NTPase"/>
</dbReference>
<dbReference type="NCBIfam" id="TIGR01039">
    <property type="entry name" value="atpD"/>
    <property type="match status" value="1"/>
</dbReference>
<dbReference type="PANTHER" id="PTHR15184">
    <property type="entry name" value="ATP SYNTHASE"/>
    <property type="match status" value="1"/>
</dbReference>
<dbReference type="PANTHER" id="PTHR15184:SF71">
    <property type="entry name" value="ATP SYNTHASE SUBUNIT BETA, MITOCHONDRIAL"/>
    <property type="match status" value="1"/>
</dbReference>
<dbReference type="Pfam" id="PF00006">
    <property type="entry name" value="ATP-synt_ab"/>
    <property type="match status" value="1"/>
</dbReference>
<dbReference type="Pfam" id="PF02874">
    <property type="entry name" value="ATP-synt_ab_N"/>
    <property type="match status" value="1"/>
</dbReference>
<dbReference type="Pfam" id="PF22919">
    <property type="entry name" value="ATP-synt_VA_C"/>
    <property type="match status" value="1"/>
</dbReference>
<dbReference type="SMART" id="SM00382">
    <property type="entry name" value="AAA"/>
    <property type="match status" value="1"/>
</dbReference>
<dbReference type="SUPFAM" id="SSF47917">
    <property type="entry name" value="C-terminal domain of alpha and beta subunits of F1 ATP synthase"/>
    <property type="match status" value="1"/>
</dbReference>
<dbReference type="SUPFAM" id="SSF50615">
    <property type="entry name" value="N-terminal domain of alpha and beta subunits of F1 ATP synthase"/>
    <property type="match status" value="1"/>
</dbReference>
<dbReference type="SUPFAM" id="SSF52540">
    <property type="entry name" value="P-loop containing nucleoside triphosphate hydrolases"/>
    <property type="match status" value="1"/>
</dbReference>
<dbReference type="PROSITE" id="PS00152">
    <property type="entry name" value="ATPASE_ALPHA_BETA"/>
    <property type="match status" value="1"/>
</dbReference>
<sequence length="492" mass="53180">MKTNFLAFGMSTLVAKNIGSITQVIGPVLDVAFSPGKMPNIYNSLIVKDQNSAGEEINVTCEVQQLLGNNKVRAVAMSATDGMMRGMKVIDTGAPLTVPVGEATLGRIFNVLGEPVDNLGPVEVTTTFPIHRAAPAFTQLDTKLSIFETGIKVVDLLAPYRRGGKIGLFGGAGVGKTVLIMELINNILKAHGGVSVFGGVGERTREGNDLYMEMKESKVINEQNISESKVALVYGQMNEPPGARMRVGLTALTMAEYFRDVNKQDVLLFIDNIFRFVQAGSEVSALLGRMPSAVGYQPTLSTEMGTLQERITSTKEGSITSIQAVYVPADDLTDPAPATTFAHLDATTVLSRGLAAKGIYPAVDPLDSTSTMLQPWIVGEEHYETAQGVKQTLQRYKELQDIIAILGLDELSEEDRLTVARARKIERFLSQPFFVAEVFTGSPGKYVSLRETIKGFQMILSGELDSLPEQAFYLVGNIDEATAKAATLQVES</sequence>
<organism>
    <name type="scientific">Marchantia polymorpha</name>
    <name type="common">Common liverwort</name>
    <name type="synonym">Marchantia aquatica</name>
    <dbReference type="NCBI Taxonomy" id="3197"/>
    <lineage>
        <taxon>Eukaryota</taxon>
        <taxon>Viridiplantae</taxon>
        <taxon>Streptophyta</taxon>
        <taxon>Embryophyta</taxon>
        <taxon>Marchantiophyta</taxon>
        <taxon>Marchantiopsida</taxon>
        <taxon>Marchantiidae</taxon>
        <taxon>Marchantiales</taxon>
        <taxon>Marchantiaceae</taxon>
        <taxon>Marchantia</taxon>
    </lineage>
</organism>
<protein>
    <recommendedName>
        <fullName evidence="1">ATP synthase subunit beta, chloroplastic</fullName>
        <ecNumber evidence="1">7.1.2.2</ecNumber>
    </recommendedName>
    <alternativeName>
        <fullName evidence="1">ATP synthase F1 sector subunit beta</fullName>
    </alternativeName>
    <alternativeName>
        <fullName evidence="1">F-ATPase subunit beta</fullName>
    </alternativeName>
</protein>
<comment type="function">
    <text evidence="1">Produces ATP from ADP in the presence of a proton gradient across the membrane. The catalytic sites are hosted primarily by the beta subunits.</text>
</comment>
<comment type="catalytic activity">
    <reaction evidence="1">
        <text>ATP + H2O + 4 H(+)(in) = ADP + phosphate + 5 H(+)(out)</text>
        <dbReference type="Rhea" id="RHEA:57720"/>
        <dbReference type="ChEBI" id="CHEBI:15377"/>
        <dbReference type="ChEBI" id="CHEBI:15378"/>
        <dbReference type="ChEBI" id="CHEBI:30616"/>
        <dbReference type="ChEBI" id="CHEBI:43474"/>
        <dbReference type="ChEBI" id="CHEBI:456216"/>
        <dbReference type="EC" id="7.1.2.2"/>
    </reaction>
</comment>
<comment type="subunit">
    <text evidence="1">F-type ATPases have 2 components, CF(1) - the catalytic core - and CF(0) - the membrane proton channel. CF(1) has five subunits: alpha(3), beta(3), gamma(1), delta(1), epsilon(1). CF(0) has four main subunits: a(1), b(1), b'(1) and c(9-12).</text>
</comment>
<comment type="subcellular location">
    <subcellularLocation>
        <location evidence="1">Plastid</location>
        <location evidence="1">Chloroplast thylakoid membrane</location>
        <topology evidence="1">Peripheral membrane protein</topology>
    </subcellularLocation>
</comment>
<comment type="similarity">
    <text evidence="1">Belongs to the ATPase alpha/beta chains family.</text>
</comment>
<accession>P06284</accession>
<feature type="chain" id="PRO_0000144523" description="ATP synthase subunit beta, chloroplastic">
    <location>
        <begin position="1"/>
        <end position="492"/>
    </location>
</feature>
<feature type="binding site" evidence="1">
    <location>
        <begin position="170"/>
        <end position="177"/>
    </location>
    <ligand>
        <name>ATP</name>
        <dbReference type="ChEBI" id="CHEBI:30616"/>
    </ligand>
</feature>
<name>ATPB_MARPO</name>
<keyword id="KW-0066">ATP synthesis</keyword>
<keyword id="KW-0067">ATP-binding</keyword>
<keyword id="KW-0139">CF(1)</keyword>
<keyword id="KW-0150">Chloroplast</keyword>
<keyword id="KW-0375">Hydrogen ion transport</keyword>
<keyword id="KW-0406">Ion transport</keyword>
<keyword id="KW-0472">Membrane</keyword>
<keyword id="KW-0547">Nucleotide-binding</keyword>
<keyword id="KW-0934">Plastid</keyword>
<keyword id="KW-0793">Thylakoid</keyword>
<keyword id="KW-1278">Translocase</keyword>
<keyword id="KW-0813">Transport</keyword>
<proteinExistence type="inferred from homology"/>
<gene>
    <name evidence="1" type="primary">atpB</name>
</gene>
<geneLocation type="chloroplast"/>
<reference key="1">
    <citation type="journal article" date="1986" name="Nature">
        <title>Chloroplast gene organization deduced from complete sequence of liverwort Marchantia polymorpha chloroplast DNA.</title>
        <authorList>
            <person name="Ohyama K."/>
            <person name="Fukuzawa H."/>
            <person name="Kohchi T."/>
            <person name="Shirai H."/>
            <person name="Sano T."/>
            <person name="Sano S."/>
            <person name="Umesono K."/>
            <person name="Shiki Y."/>
            <person name="Takeuchi M."/>
            <person name="Chang Z."/>
            <person name="Aota S."/>
            <person name="Inokuchi H."/>
            <person name="Ozeki H."/>
        </authorList>
    </citation>
    <scope>NUCLEOTIDE SEQUENCE [LARGE SCALE GENOMIC DNA]</scope>
</reference>
<reference key="2">
    <citation type="journal article" date="1988" name="J. Mol. Biol.">
        <title>Structure and organization of Marchantia polymorpha chloroplast genome. II. Gene organization of the large single copy region from rps'12 to atpB.</title>
        <authorList>
            <person name="Umesono K."/>
            <person name="Inokuchi H."/>
            <person name="Shiki Y."/>
            <person name="Takeuchi M."/>
            <person name="Chang Z."/>
            <person name="Fukuzawa H."/>
            <person name="Kohchi T."/>
            <person name="Shirai H."/>
            <person name="Ohyama K."/>
            <person name="Ozeki H."/>
        </authorList>
    </citation>
    <scope>NUCLEOTIDE SEQUENCE [GENOMIC DNA]</scope>
</reference>
<reference key="3">
    <citation type="journal article" date="1988" name="J. Mol. Biol.">
        <title>Structure and organization of Marchantia polymorpha chloroplast genome. III. Gene organization of the large single copy region from rbcL to trnI(CAU).</title>
        <authorList>
            <person name="Fukuzawa H."/>
            <person name="Kohchi T."/>
            <person name="Sano T."/>
            <person name="Shirai H."/>
            <person name="Umesono K."/>
            <person name="Inokuchi H."/>
            <person name="Ozeki H."/>
            <person name="Ohyama K."/>
        </authorList>
    </citation>
    <scope>NUCLEOTIDE SEQUENCE [GENOMIC DNA] OF 1-12</scope>
</reference>
<evidence type="ECO:0000255" key="1">
    <source>
        <dbReference type="HAMAP-Rule" id="MF_01347"/>
    </source>
</evidence>